<organism>
    <name type="scientific">Verminephrobacter eiseniae (strain EF01-2)</name>
    <dbReference type="NCBI Taxonomy" id="391735"/>
    <lineage>
        <taxon>Bacteria</taxon>
        <taxon>Pseudomonadati</taxon>
        <taxon>Pseudomonadota</taxon>
        <taxon>Betaproteobacteria</taxon>
        <taxon>Burkholderiales</taxon>
        <taxon>Comamonadaceae</taxon>
        <taxon>Verminephrobacter</taxon>
    </lineage>
</organism>
<comment type="function">
    <text evidence="1">Part of the Sec protein translocase complex. Interacts with the SecYEG preprotein conducting channel. Has a central role in coupling the hydrolysis of ATP to the transfer of proteins into and across the cell membrane, serving both as a receptor for the preprotein-SecB complex and as an ATP-driven molecular motor driving the stepwise translocation of polypeptide chains across the membrane.</text>
</comment>
<comment type="catalytic activity">
    <reaction evidence="1">
        <text>ATP + H2O + cellular proteinSide 1 = ADP + phosphate + cellular proteinSide 2.</text>
        <dbReference type="EC" id="7.4.2.8"/>
    </reaction>
</comment>
<comment type="cofactor">
    <cofactor evidence="1">
        <name>Zn(2+)</name>
        <dbReference type="ChEBI" id="CHEBI:29105"/>
    </cofactor>
    <text evidence="1">May bind 1 zinc ion per subunit.</text>
</comment>
<comment type="subunit">
    <text evidence="1">Monomer and homodimer. Part of the essential Sec protein translocation apparatus which comprises SecA, SecYEG and auxiliary proteins SecDF-YajC and YidC.</text>
</comment>
<comment type="subcellular location">
    <subcellularLocation>
        <location evidence="1">Cell inner membrane</location>
        <topology evidence="1">Peripheral membrane protein</topology>
        <orientation evidence="1">Cytoplasmic side</orientation>
    </subcellularLocation>
    <subcellularLocation>
        <location evidence="1">Cytoplasm</location>
    </subcellularLocation>
    <text evidence="1">Distribution is 50-50.</text>
</comment>
<comment type="similarity">
    <text evidence="1">Belongs to the SecA family.</text>
</comment>
<proteinExistence type="inferred from homology"/>
<dbReference type="EC" id="7.4.2.8" evidence="1"/>
<dbReference type="EMBL" id="CP000542">
    <property type="protein sequence ID" value="ABM59635.1"/>
    <property type="molecule type" value="Genomic_DNA"/>
</dbReference>
<dbReference type="RefSeq" id="WP_011811622.1">
    <property type="nucleotide sequence ID" value="NC_008786.1"/>
</dbReference>
<dbReference type="SMR" id="A1WPS8"/>
<dbReference type="STRING" id="391735.Veis_3928"/>
<dbReference type="GeneID" id="76462279"/>
<dbReference type="KEGG" id="vei:Veis_3928"/>
<dbReference type="eggNOG" id="COG0653">
    <property type="taxonomic scope" value="Bacteria"/>
</dbReference>
<dbReference type="HOGENOM" id="CLU_005314_3_0_4"/>
<dbReference type="OrthoDB" id="9805579at2"/>
<dbReference type="Proteomes" id="UP000000374">
    <property type="component" value="Chromosome"/>
</dbReference>
<dbReference type="GO" id="GO:0031522">
    <property type="term" value="C:cell envelope Sec protein transport complex"/>
    <property type="evidence" value="ECO:0007669"/>
    <property type="project" value="TreeGrafter"/>
</dbReference>
<dbReference type="GO" id="GO:0005829">
    <property type="term" value="C:cytosol"/>
    <property type="evidence" value="ECO:0007669"/>
    <property type="project" value="TreeGrafter"/>
</dbReference>
<dbReference type="GO" id="GO:0005886">
    <property type="term" value="C:plasma membrane"/>
    <property type="evidence" value="ECO:0007669"/>
    <property type="project" value="UniProtKB-SubCell"/>
</dbReference>
<dbReference type="GO" id="GO:0005524">
    <property type="term" value="F:ATP binding"/>
    <property type="evidence" value="ECO:0007669"/>
    <property type="project" value="UniProtKB-UniRule"/>
</dbReference>
<dbReference type="GO" id="GO:0046872">
    <property type="term" value="F:metal ion binding"/>
    <property type="evidence" value="ECO:0007669"/>
    <property type="project" value="UniProtKB-KW"/>
</dbReference>
<dbReference type="GO" id="GO:0008564">
    <property type="term" value="F:protein-exporting ATPase activity"/>
    <property type="evidence" value="ECO:0007669"/>
    <property type="project" value="UniProtKB-EC"/>
</dbReference>
<dbReference type="GO" id="GO:0065002">
    <property type="term" value="P:intracellular protein transmembrane transport"/>
    <property type="evidence" value="ECO:0007669"/>
    <property type="project" value="UniProtKB-UniRule"/>
</dbReference>
<dbReference type="GO" id="GO:0017038">
    <property type="term" value="P:protein import"/>
    <property type="evidence" value="ECO:0007669"/>
    <property type="project" value="InterPro"/>
</dbReference>
<dbReference type="GO" id="GO:0006605">
    <property type="term" value="P:protein targeting"/>
    <property type="evidence" value="ECO:0007669"/>
    <property type="project" value="UniProtKB-UniRule"/>
</dbReference>
<dbReference type="GO" id="GO:0043952">
    <property type="term" value="P:protein transport by the Sec complex"/>
    <property type="evidence" value="ECO:0007669"/>
    <property type="project" value="TreeGrafter"/>
</dbReference>
<dbReference type="CDD" id="cd17928">
    <property type="entry name" value="DEXDc_SecA"/>
    <property type="match status" value="1"/>
</dbReference>
<dbReference type="CDD" id="cd18803">
    <property type="entry name" value="SF2_C_secA"/>
    <property type="match status" value="1"/>
</dbReference>
<dbReference type="FunFam" id="3.40.50.300:FF:000113">
    <property type="entry name" value="Preprotein translocase subunit SecA"/>
    <property type="match status" value="1"/>
</dbReference>
<dbReference type="FunFam" id="3.90.1440.10:FF:000001">
    <property type="entry name" value="Preprotein translocase subunit SecA"/>
    <property type="match status" value="1"/>
</dbReference>
<dbReference type="FunFam" id="1.10.3060.10:FF:000003">
    <property type="entry name" value="Protein translocase subunit SecA"/>
    <property type="match status" value="1"/>
</dbReference>
<dbReference type="Gene3D" id="1.10.3060.10">
    <property type="entry name" value="Helical scaffold and wing domains of SecA"/>
    <property type="match status" value="1"/>
</dbReference>
<dbReference type="Gene3D" id="3.40.50.300">
    <property type="entry name" value="P-loop containing nucleotide triphosphate hydrolases"/>
    <property type="match status" value="2"/>
</dbReference>
<dbReference type="Gene3D" id="3.90.1440.10">
    <property type="entry name" value="SecA, preprotein cross-linking domain"/>
    <property type="match status" value="1"/>
</dbReference>
<dbReference type="HAMAP" id="MF_01382">
    <property type="entry name" value="SecA"/>
    <property type="match status" value="1"/>
</dbReference>
<dbReference type="InterPro" id="IPR014001">
    <property type="entry name" value="Helicase_ATP-bd"/>
</dbReference>
<dbReference type="InterPro" id="IPR001650">
    <property type="entry name" value="Helicase_C-like"/>
</dbReference>
<dbReference type="InterPro" id="IPR027417">
    <property type="entry name" value="P-loop_NTPase"/>
</dbReference>
<dbReference type="InterPro" id="IPR004027">
    <property type="entry name" value="SEC_C_motif"/>
</dbReference>
<dbReference type="InterPro" id="IPR000185">
    <property type="entry name" value="SecA"/>
</dbReference>
<dbReference type="InterPro" id="IPR020937">
    <property type="entry name" value="SecA_CS"/>
</dbReference>
<dbReference type="InterPro" id="IPR011115">
    <property type="entry name" value="SecA_DEAD"/>
</dbReference>
<dbReference type="InterPro" id="IPR014018">
    <property type="entry name" value="SecA_motor_DEAD"/>
</dbReference>
<dbReference type="InterPro" id="IPR011130">
    <property type="entry name" value="SecA_preprotein_X-link_dom"/>
</dbReference>
<dbReference type="InterPro" id="IPR044722">
    <property type="entry name" value="SecA_SF2_C"/>
</dbReference>
<dbReference type="InterPro" id="IPR011116">
    <property type="entry name" value="SecA_Wing/Scaffold"/>
</dbReference>
<dbReference type="InterPro" id="IPR036266">
    <property type="entry name" value="SecA_Wing/Scaffold_sf"/>
</dbReference>
<dbReference type="InterPro" id="IPR036670">
    <property type="entry name" value="SecA_X-link_sf"/>
</dbReference>
<dbReference type="NCBIfam" id="NF009538">
    <property type="entry name" value="PRK12904.1"/>
    <property type="match status" value="1"/>
</dbReference>
<dbReference type="NCBIfam" id="TIGR00963">
    <property type="entry name" value="secA"/>
    <property type="match status" value="1"/>
</dbReference>
<dbReference type="PANTHER" id="PTHR30612:SF0">
    <property type="entry name" value="CHLOROPLAST PROTEIN-TRANSPORTING ATPASE"/>
    <property type="match status" value="1"/>
</dbReference>
<dbReference type="PANTHER" id="PTHR30612">
    <property type="entry name" value="SECA INNER MEMBRANE COMPONENT OF SEC PROTEIN SECRETION SYSTEM"/>
    <property type="match status" value="1"/>
</dbReference>
<dbReference type="Pfam" id="PF21090">
    <property type="entry name" value="P-loop_SecA"/>
    <property type="match status" value="1"/>
</dbReference>
<dbReference type="Pfam" id="PF02810">
    <property type="entry name" value="SEC-C"/>
    <property type="match status" value="1"/>
</dbReference>
<dbReference type="Pfam" id="PF07517">
    <property type="entry name" value="SecA_DEAD"/>
    <property type="match status" value="1"/>
</dbReference>
<dbReference type="Pfam" id="PF01043">
    <property type="entry name" value="SecA_PP_bind"/>
    <property type="match status" value="1"/>
</dbReference>
<dbReference type="Pfam" id="PF07516">
    <property type="entry name" value="SecA_SW"/>
    <property type="match status" value="1"/>
</dbReference>
<dbReference type="PRINTS" id="PR00906">
    <property type="entry name" value="SECA"/>
</dbReference>
<dbReference type="SMART" id="SM00957">
    <property type="entry name" value="SecA_DEAD"/>
    <property type="match status" value="1"/>
</dbReference>
<dbReference type="SMART" id="SM00958">
    <property type="entry name" value="SecA_PP_bind"/>
    <property type="match status" value="1"/>
</dbReference>
<dbReference type="SUPFAM" id="SSF81886">
    <property type="entry name" value="Helical scaffold and wing domains of SecA"/>
    <property type="match status" value="1"/>
</dbReference>
<dbReference type="SUPFAM" id="SSF52540">
    <property type="entry name" value="P-loop containing nucleoside triphosphate hydrolases"/>
    <property type="match status" value="2"/>
</dbReference>
<dbReference type="SUPFAM" id="SSF81767">
    <property type="entry name" value="Pre-protein crosslinking domain of SecA"/>
    <property type="match status" value="1"/>
</dbReference>
<dbReference type="PROSITE" id="PS01312">
    <property type="entry name" value="SECA"/>
    <property type="match status" value="1"/>
</dbReference>
<dbReference type="PROSITE" id="PS51196">
    <property type="entry name" value="SECA_MOTOR_DEAD"/>
    <property type="match status" value="1"/>
</dbReference>
<protein>
    <recommendedName>
        <fullName evidence="1">Protein translocase subunit SecA</fullName>
        <ecNumber evidence="1">7.4.2.8</ecNumber>
    </recommendedName>
</protein>
<name>SECA_VEREI</name>
<gene>
    <name evidence="1" type="primary">secA</name>
    <name type="ordered locus">Veis_3928</name>
</gene>
<feature type="chain" id="PRO_0000321030" description="Protein translocase subunit SecA">
    <location>
        <begin position="1"/>
        <end position="917"/>
    </location>
</feature>
<feature type="binding site" evidence="1">
    <location>
        <position position="87"/>
    </location>
    <ligand>
        <name>ATP</name>
        <dbReference type="ChEBI" id="CHEBI:30616"/>
    </ligand>
</feature>
<feature type="binding site" evidence="1">
    <location>
        <begin position="105"/>
        <end position="109"/>
    </location>
    <ligand>
        <name>ATP</name>
        <dbReference type="ChEBI" id="CHEBI:30616"/>
    </ligand>
</feature>
<feature type="binding site" evidence="1">
    <location>
        <position position="516"/>
    </location>
    <ligand>
        <name>ATP</name>
        <dbReference type="ChEBI" id="CHEBI:30616"/>
    </ligand>
</feature>
<feature type="binding site" evidence="1">
    <location>
        <position position="901"/>
    </location>
    <ligand>
        <name>Zn(2+)</name>
        <dbReference type="ChEBI" id="CHEBI:29105"/>
    </ligand>
</feature>
<feature type="binding site" evidence="1">
    <location>
        <position position="903"/>
    </location>
    <ligand>
        <name>Zn(2+)</name>
        <dbReference type="ChEBI" id="CHEBI:29105"/>
    </ligand>
</feature>
<feature type="binding site" evidence="1">
    <location>
        <position position="912"/>
    </location>
    <ligand>
        <name>Zn(2+)</name>
        <dbReference type="ChEBI" id="CHEBI:29105"/>
    </ligand>
</feature>
<feature type="binding site" evidence="1">
    <location>
        <position position="913"/>
    </location>
    <ligand>
        <name>Zn(2+)</name>
        <dbReference type="ChEBI" id="CHEBI:29105"/>
    </ligand>
</feature>
<keyword id="KW-0067">ATP-binding</keyword>
<keyword id="KW-0997">Cell inner membrane</keyword>
<keyword id="KW-1003">Cell membrane</keyword>
<keyword id="KW-0963">Cytoplasm</keyword>
<keyword id="KW-0472">Membrane</keyword>
<keyword id="KW-0479">Metal-binding</keyword>
<keyword id="KW-0547">Nucleotide-binding</keyword>
<keyword id="KW-0653">Protein transport</keyword>
<keyword id="KW-1185">Reference proteome</keyword>
<keyword id="KW-1278">Translocase</keyword>
<keyword id="KW-0811">Translocation</keyword>
<keyword id="KW-0813">Transport</keyword>
<keyword id="KW-0862">Zinc</keyword>
<accession>A1WPS8</accession>
<evidence type="ECO:0000255" key="1">
    <source>
        <dbReference type="HAMAP-Rule" id="MF_01382"/>
    </source>
</evidence>
<reference key="1">
    <citation type="submission" date="2006-12" db="EMBL/GenBank/DDBJ databases">
        <title>Complete sequence of chromosome 1 of Verminephrobacter eiseniae EF01-2.</title>
        <authorList>
            <person name="Copeland A."/>
            <person name="Lucas S."/>
            <person name="Lapidus A."/>
            <person name="Barry K."/>
            <person name="Detter J.C."/>
            <person name="Glavina del Rio T."/>
            <person name="Dalin E."/>
            <person name="Tice H."/>
            <person name="Pitluck S."/>
            <person name="Chertkov O."/>
            <person name="Brettin T."/>
            <person name="Bruce D."/>
            <person name="Han C."/>
            <person name="Tapia R."/>
            <person name="Gilna P."/>
            <person name="Schmutz J."/>
            <person name="Larimer F."/>
            <person name="Land M."/>
            <person name="Hauser L."/>
            <person name="Kyrpides N."/>
            <person name="Kim E."/>
            <person name="Stahl D."/>
            <person name="Richardson P."/>
        </authorList>
    </citation>
    <scope>NUCLEOTIDE SEQUENCE [LARGE SCALE GENOMIC DNA]</scope>
    <source>
        <strain>EF01-2</strain>
    </source>
</reference>
<sequence length="917" mass="103660">MATNFLTKIFGSRNDRLLKQYRKTVVHINALEPEYEQMSHEQLRAKTQEFKERVARGESLESILPAAFALVREGSKRIMKMRHFDVQLLGGMALHFGKIAEMRTGEGKTLTATLPVYLNALSGKGVHVVTVNDYLAHRDAQWMGRLYNFLGLTVGINLPNMPRAEKQAAYRADITYGTNNEYGFDYLRDNMVYEAQDRVQQGLNYAIVDEVDSILIDEARTPLIISGQAEDHQALYVTMNQLVPQLVRQEGEADLRTGEGVTRLGDFTLDEKSHQVFLTEQGHETAERIFASHGLIAEGASVYDPANIALMHHLYAALRARHLYHRDQHYVVQNDEIVIVDEFTGRLMSGRRWSEGLHQAVEAKEGVTIQAENQTLASITFQNYFRLYHKLAGMTGTADTEAYEFQEIYGLETMVIPPNRPSRRNDQLDLVYKTTREKYAAAVMDIRACHERGQPVLVGTTSIENSEIIDQLLSQEGLPHQVLNAKQHAREADIVAQAGRAGMITIATNMAGRGTDIVLGGNVEKDVAAIEADTALSEAERAARISALRAQWQIEHEKVKALGGLRIIATERHESRRIDNQLRGRSGRQGDPGSSRFYLGLDDALMRIFAGERVKAIMDRLKMPDGEAIEAGIVTRSIESAQRKVEARNFDIRKQLLEYDDVANDQRKVIYQQRNEILDASDLSDLIAAMREDCMTDLVRQYVPAESMEEQWDLPTLEKRLASEWQLTMALQELVQGANAITDDEILDRVRQAAKAAFDAKVEQVGRENFTQFERMVLLQNFDTQWRDHLSALDYLRQGIHLRGYAQKQPKQEYKREAFELFRQLIDRVKNEVTKLLMTVQVQSPTQLEQAAQDMESRAESIANVTYTAPTDTGQVEATLAAQMAERPLPQGMRVGRNDRCPCGSGKKYKHCHGKLA</sequence>